<organism>
    <name type="scientific">Nostoc sp. (strain PCC 7120 / SAG 25.82 / UTEX 2576)</name>
    <dbReference type="NCBI Taxonomy" id="103690"/>
    <lineage>
        <taxon>Bacteria</taxon>
        <taxon>Bacillati</taxon>
        <taxon>Cyanobacteriota</taxon>
        <taxon>Cyanophyceae</taxon>
        <taxon>Nostocales</taxon>
        <taxon>Nostocaceae</taxon>
        <taxon>Nostoc</taxon>
    </lineage>
</organism>
<name>IDI2_NOSS1</name>
<keyword id="KW-0963">Cytoplasm</keyword>
<keyword id="KW-0285">Flavoprotein</keyword>
<keyword id="KW-0288">FMN</keyword>
<keyword id="KW-0413">Isomerase</keyword>
<keyword id="KW-0414">Isoprene biosynthesis</keyword>
<keyword id="KW-0460">Magnesium</keyword>
<keyword id="KW-0479">Metal-binding</keyword>
<keyword id="KW-0521">NADP</keyword>
<keyword id="KW-1185">Reference proteome</keyword>
<comment type="function">
    <text evidence="1">Involved in the biosynthesis of isoprenoids. Catalyzes the 1,3-allylic rearrangement of the homoallylic substrate isopentenyl (IPP) to its allylic isomer, dimethylallyl diphosphate (DMAPP).</text>
</comment>
<comment type="catalytic activity">
    <reaction evidence="1">
        <text>isopentenyl diphosphate = dimethylallyl diphosphate</text>
        <dbReference type="Rhea" id="RHEA:23284"/>
        <dbReference type="ChEBI" id="CHEBI:57623"/>
        <dbReference type="ChEBI" id="CHEBI:128769"/>
        <dbReference type="EC" id="5.3.3.2"/>
    </reaction>
</comment>
<comment type="cofactor">
    <cofactor evidence="1">
        <name>FMN</name>
        <dbReference type="ChEBI" id="CHEBI:58210"/>
    </cofactor>
</comment>
<comment type="cofactor">
    <cofactor evidence="1">
        <name>NADPH</name>
        <dbReference type="ChEBI" id="CHEBI:57783"/>
    </cofactor>
</comment>
<comment type="cofactor">
    <cofactor evidence="1">
        <name>Mg(2+)</name>
        <dbReference type="ChEBI" id="CHEBI:18420"/>
    </cofactor>
</comment>
<comment type="subunit">
    <text evidence="1">Homooctamer. Dimer of tetramers.</text>
</comment>
<comment type="subcellular location">
    <subcellularLocation>
        <location evidence="1">Cytoplasm</location>
    </subcellularLocation>
</comment>
<comment type="similarity">
    <text evidence="1">Belongs to the IPP isomerase type 2 family.</text>
</comment>
<feature type="chain" id="PRO_0000134403" description="Isopentenyl-diphosphate delta-isomerase">
    <location>
        <begin position="1"/>
        <end position="350"/>
    </location>
</feature>
<feature type="binding site" evidence="1">
    <location>
        <begin position="15"/>
        <end position="16"/>
    </location>
    <ligand>
        <name>substrate</name>
    </ligand>
</feature>
<feature type="binding site" evidence="1">
    <location>
        <position position="73"/>
    </location>
    <ligand>
        <name>FMN</name>
        <dbReference type="ChEBI" id="CHEBI:58210"/>
    </ligand>
</feature>
<feature type="binding site" evidence="1">
    <location>
        <begin position="74"/>
        <end position="76"/>
    </location>
    <ligand>
        <name>FMN</name>
        <dbReference type="ChEBI" id="CHEBI:58210"/>
    </ligand>
</feature>
<feature type="binding site" evidence="1">
    <location>
        <begin position="104"/>
        <end position="106"/>
    </location>
    <ligand>
        <name>substrate</name>
    </ligand>
</feature>
<feature type="binding site" evidence="1">
    <location>
        <position position="104"/>
    </location>
    <ligand>
        <name>FMN</name>
        <dbReference type="ChEBI" id="CHEBI:58210"/>
    </ligand>
</feature>
<feature type="binding site" evidence="1">
    <location>
        <position position="132"/>
    </location>
    <ligand>
        <name>FMN</name>
        <dbReference type="ChEBI" id="CHEBI:58210"/>
    </ligand>
</feature>
<feature type="binding site" evidence="1">
    <location>
        <position position="167"/>
    </location>
    <ligand>
        <name>substrate</name>
    </ligand>
</feature>
<feature type="binding site" evidence="1">
    <location>
        <position position="168"/>
    </location>
    <ligand>
        <name>Mg(2+)</name>
        <dbReference type="ChEBI" id="CHEBI:18420"/>
    </ligand>
</feature>
<feature type="binding site" evidence="1">
    <location>
        <position position="199"/>
    </location>
    <ligand>
        <name>FMN</name>
        <dbReference type="ChEBI" id="CHEBI:58210"/>
    </ligand>
</feature>
<feature type="binding site" evidence="1">
    <location>
        <position position="229"/>
    </location>
    <ligand>
        <name>FMN</name>
        <dbReference type="ChEBI" id="CHEBI:58210"/>
    </ligand>
</feature>
<feature type="binding site" evidence="1">
    <location>
        <begin position="279"/>
        <end position="281"/>
    </location>
    <ligand>
        <name>FMN</name>
        <dbReference type="ChEBI" id="CHEBI:58210"/>
    </ligand>
</feature>
<feature type="binding site" evidence="1">
    <location>
        <begin position="300"/>
        <end position="301"/>
    </location>
    <ligand>
        <name>FMN</name>
        <dbReference type="ChEBI" id="CHEBI:58210"/>
    </ligand>
</feature>
<gene>
    <name evidence="1" type="primary">fni</name>
    <name type="ordered locus">all4591</name>
</gene>
<proteinExistence type="inferred from homology"/>
<accession>Q8YNH4</accession>
<protein>
    <recommendedName>
        <fullName evidence="1">Isopentenyl-diphosphate delta-isomerase</fullName>
        <shortName evidence="1">IPP isomerase</shortName>
        <ecNumber evidence="1">5.3.3.2</ecNumber>
    </recommendedName>
    <alternativeName>
        <fullName evidence="1">Isopentenyl diphosphate:dimethylallyl diphosphate isomerase</fullName>
    </alternativeName>
    <alternativeName>
        <fullName evidence="1">Isopentenyl pyrophosphate isomerase</fullName>
    </alternativeName>
    <alternativeName>
        <fullName evidence="1">Type 2 isopentenyl diphosphate isomerase</fullName>
        <shortName evidence="1">IDI-2</shortName>
    </alternativeName>
</protein>
<reference key="1">
    <citation type="journal article" date="2001" name="DNA Res.">
        <title>Complete genomic sequence of the filamentous nitrogen-fixing cyanobacterium Anabaena sp. strain PCC 7120.</title>
        <authorList>
            <person name="Kaneko T."/>
            <person name="Nakamura Y."/>
            <person name="Wolk C.P."/>
            <person name="Kuritz T."/>
            <person name="Sasamoto S."/>
            <person name="Watanabe A."/>
            <person name="Iriguchi M."/>
            <person name="Ishikawa A."/>
            <person name="Kawashima K."/>
            <person name="Kimura T."/>
            <person name="Kishida Y."/>
            <person name="Kohara M."/>
            <person name="Matsumoto M."/>
            <person name="Matsuno A."/>
            <person name="Muraki A."/>
            <person name="Nakazaki N."/>
            <person name="Shimpo S."/>
            <person name="Sugimoto M."/>
            <person name="Takazawa M."/>
            <person name="Yamada M."/>
            <person name="Yasuda M."/>
            <person name="Tabata S."/>
        </authorList>
    </citation>
    <scope>NUCLEOTIDE SEQUENCE [LARGE SCALE GENOMIC DNA]</scope>
    <source>
        <strain>PCC 7120 / SAG 25.82 / UTEX 2576</strain>
    </source>
</reference>
<dbReference type="EC" id="5.3.3.2" evidence="1"/>
<dbReference type="EMBL" id="BA000019">
    <property type="protein sequence ID" value="BAB76290.1"/>
    <property type="molecule type" value="Genomic_DNA"/>
</dbReference>
<dbReference type="PIR" id="AG2379">
    <property type="entry name" value="AG2379"/>
</dbReference>
<dbReference type="RefSeq" id="WP_010998723.1">
    <property type="nucleotide sequence ID" value="NZ_RSCN01000007.1"/>
</dbReference>
<dbReference type="SMR" id="Q8YNH4"/>
<dbReference type="STRING" id="103690.gene:10496641"/>
<dbReference type="KEGG" id="ana:all4591"/>
<dbReference type="eggNOG" id="COG1304">
    <property type="taxonomic scope" value="Bacteria"/>
</dbReference>
<dbReference type="OrthoDB" id="9795032at2"/>
<dbReference type="Proteomes" id="UP000002483">
    <property type="component" value="Chromosome"/>
</dbReference>
<dbReference type="GO" id="GO:0005737">
    <property type="term" value="C:cytoplasm"/>
    <property type="evidence" value="ECO:0007669"/>
    <property type="project" value="UniProtKB-SubCell"/>
</dbReference>
<dbReference type="GO" id="GO:0010181">
    <property type="term" value="F:FMN binding"/>
    <property type="evidence" value="ECO:0007669"/>
    <property type="project" value="UniProtKB-UniRule"/>
</dbReference>
<dbReference type="GO" id="GO:0004452">
    <property type="term" value="F:isopentenyl-diphosphate delta-isomerase activity"/>
    <property type="evidence" value="ECO:0007669"/>
    <property type="project" value="UniProtKB-UniRule"/>
</dbReference>
<dbReference type="GO" id="GO:0000287">
    <property type="term" value="F:magnesium ion binding"/>
    <property type="evidence" value="ECO:0007669"/>
    <property type="project" value="UniProtKB-UniRule"/>
</dbReference>
<dbReference type="GO" id="GO:0070402">
    <property type="term" value="F:NADPH binding"/>
    <property type="evidence" value="ECO:0007669"/>
    <property type="project" value="UniProtKB-UniRule"/>
</dbReference>
<dbReference type="GO" id="GO:0016491">
    <property type="term" value="F:oxidoreductase activity"/>
    <property type="evidence" value="ECO:0007669"/>
    <property type="project" value="InterPro"/>
</dbReference>
<dbReference type="GO" id="GO:0008299">
    <property type="term" value="P:isoprenoid biosynthetic process"/>
    <property type="evidence" value="ECO:0007669"/>
    <property type="project" value="UniProtKB-UniRule"/>
</dbReference>
<dbReference type="CDD" id="cd02811">
    <property type="entry name" value="IDI-2_FMN"/>
    <property type="match status" value="1"/>
</dbReference>
<dbReference type="Gene3D" id="3.20.20.70">
    <property type="entry name" value="Aldolase class I"/>
    <property type="match status" value="1"/>
</dbReference>
<dbReference type="HAMAP" id="MF_00354">
    <property type="entry name" value="Idi_2"/>
    <property type="match status" value="1"/>
</dbReference>
<dbReference type="InterPro" id="IPR013785">
    <property type="entry name" value="Aldolase_TIM"/>
</dbReference>
<dbReference type="InterPro" id="IPR000262">
    <property type="entry name" value="FMN-dep_DH"/>
</dbReference>
<dbReference type="InterPro" id="IPR011179">
    <property type="entry name" value="IPdP_isomerase"/>
</dbReference>
<dbReference type="NCBIfam" id="TIGR02151">
    <property type="entry name" value="IPP_isom_2"/>
    <property type="match status" value="1"/>
</dbReference>
<dbReference type="PANTHER" id="PTHR43665">
    <property type="entry name" value="ISOPENTENYL-DIPHOSPHATE DELTA-ISOMERASE"/>
    <property type="match status" value="1"/>
</dbReference>
<dbReference type="PANTHER" id="PTHR43665:SF1">
    <property type="entry name" value="ISOPENTENYL-DIPHOSPHATE DELTA-ISOMERASE"/>
    <property type="match status" value="1"/>
</dbReference>
<dbReference type="Pfam" id="PF01070">
    <property type="entry name" value="FMN_dh"/>
    <property type="match status" value="1"/>
</dbReference>
<dbReference type="PIRSF" id="PIRSF003314">
    <property type="entry name" value="IPP_isomerase"/>
    <property type="match status" value="1"/>
</dbReference>
<dbReference type="SMART" id="SM01240">
    <property type="entry name" value="IMPDH"/>
    <property type="match status" value="1"/>
</dbReference>
<dbReference type="SUPFAM" id="SSF51395">
    <property type="entry name" value="FMN-linked oxidoreductases"/>
    <property type="match status" value="1"/>
</dbReference>
<evidence type="ECO:0000255" key="1">
    <source>
        <dbReference type="HAMAP-Rule" id="MF_00354"/>
    </source>
</evidence>
<sequence>MNPPTTSDSAQTQSRKADHIRICLEEDVQFRDTTNGLERYRFTHSCLPEIDRNDIDLSATFLGKKLNAPLLISSMTGGTEEAGIINQRLAGLAQHYKLAMGVGSQRVAVEKPQVADTFAIRKYAPDVLLFANVGAVQLNYKYGLDECLRIIDMLEADALILHINPLQECIQPRGDVNFRGLLDKINQLCSKLPVPAIAKEVGNGISGAMAEKLIAAGVQAIDVAGAGGTSWAKVEGERAENAMQRRLGRTFADWGMPTAECITSVRAIAPHIPLIASGGLRDGLDVAKAIALGADIAGLAMPFLQAAVESEAALQDLTEVLIAEITTVLFCTGNANLDQLKHSGSLQRLQ</sequence>